<proteinExistence type="inferred from homology"/>
<sequence>MKFQVIAAVLLIAFCLCVVVTARMELQDVEDVENGFQKRRSCIDTIPQSRCTAFQCKHSMKYRLSFCRKTCGTC</sequence>
<reference key="1">
    <citation type="journal article" date="2010" name="Mar. Drugs">
        <title>Screening and cDNA cloning of Kv1 potassium channel toxins in sea anemones.</title>
        <authorList>
            <person name="Yamaguchi Y."/>
            <person name="Hasegawa Y."/>
            <person name="Honma T."/>
            <person name="Nagashima Y."/>
            <person name="Shiomi K."/>
        </authorList>
    </citation>
    <scope>NUCLEOTIDE SEQUENCE [MRNA]</scope>
</reference>
<accession>E2S062</accession>
<feature type="signal peptide" evidence="3">
    <location>
        <begin position="1"/>
        <end position="22"/>
    </location>
</feature>
<feature type="propeptide" id="PRO_0000425841" evidence="1">
    <location>
        <begin position="23"/>
        <end position="39"/>
    </location>
</feature>
<feature type="peptide" id="PRO_0000425842" description="Kappa-stichotoxin-Shd5a" evidence="2">
    <location>
        <begin position="40"/>
        <end position="74"/>
    </location>
</feature>
<feature type="domain" description="ShKT" evidence="4">
    <location>
        <begin position="42"/>
        <end position="74"/>
    </location>
</feature>
<feature type="site" description="Important residue for binding Kv1.3/KCNA3" evidence="2">
    <location>
        <position position="46"/>
    </location>
</feature>
<feature type="site" description="Important residue for binding Kv1.3/KCNA3" evidence="2">
    <location>
        <position position="50"/>
    </location>
</feature>
<feature type="site" description="Important residue for binding Kv1.3/KCNA3" evidence="2">
    <location>
        <position position="59"/>
    </location>
</feature>
<feature type="site" description="Important residue for binding Kv1.3/KCNA3" evidence="2">
    <location>
        <position position="60"/>
    </location>
</feature>
<feature type="site" description="Key residue for binding both Kv1.2/KCNA2 and Kv1.3/KCNA3 (occludes the channel pore like a cork in a bottle)" evidence="2">
    <location>
        <position position="61"/>
    </location>
</feature>
<feature type="site" description="Important residue for binding Kv1.3/KCNA3" evidence="2">
    <location>
        <position position="62"/>
    </location>
</feature>
<feature type="site" description="Important residue for binding Kv1.3/KCNA3" evidence="2">
    <location>
        <position position="66"/>
    </location>
</feature>
<feature type="disulfide bond" evidence="2">
    <location>
        <begin position="42"/>
        <end position="74"/>
    </location>
</feature>
<feature type="disulfide bond" evidence="2">
    <location>
        <begin position="51"/>
        <end position="67"/>
    </location>
</feature>
<feature type="disulfide bond" evidence="2">
    <location>
        <begin position="56"/>
        <end position="71"/>
    </location>
</feature>
<organism>
    <name type="scientific">Stichodactyla haddoni</name>
    <name type="common">Saddle carpet anemone</name>
    <name type="synonym">Haddon's sea anemone</name>
    <dbReference type="NCBI Taxonomy" id="475174"/>
    <lineage>
        <taxon>Eukaryota</taxon>
        <taxon>Metazoa</taxon>
        <taxon>Cnidaria</taxon>
        <taxon>Anthozoa</taxon>
        <taxon>Hexacorallia</taxon>
        <taxon>Actiniaria</taxon>
        <taxon>Stichodactylidae</taxon>
        <taxon>Stichodactyla</taxon>
    </lineage>
</organism>
<name>K1A_STIHA</name>
<keyword id="KW-0165">Cleavage on pair of basic residues</keyword>
<keyword id="KW-1015">Disulfide bond</keyword>
<keyword id="KW-0872">Ion channel impairing toxin</keyword>
<keyword id="KW-0166">Nematocyst</keyword>
<keyword id="KW-0528">Neurotoxin</keyword>
<keyword id="KW-0632">Potassium channel impairing toxin</keyword>
<keyword id="KW-0964">Secreted</keyword>
<keyword id="KW-0732">Signal</keyword>
<keyword id="KW-0800">Toxin</keyword>
<keyword id="KW-1220">Voltage-gated potassium channel impairing toxin</keyword>
<protein>
    <recommendedName>
        <fullName evidence="6">Kappa-stichotoxin-Shd5a</fullName>
        <shortName evidence="6">Kappa-SHTX-Shd5a</shortName>
    </recommendedName>
    <alternativeName>
        <fullName evidence="5">Kappa1.3-stichotoxin-Sha1a</fullName>
        <shortName evidence="5">Kappa1.3-SHTX-Sha1a</shortName>
    </alternativeName>
    <alternativeName>
        <fullName evidence="7">Potassium channel peptide toxin shtx-k</fullName>
    </alternativeName>
    <alternativeName>
        <fullName evidence="6">ShaK</fullName>
    </alternativeName>
</protein>
<dbReference type="EMBL" id="AB595205">
    <property type="protein sequence ID" value="BAJ23159.1"/>
    <property type="molecule type" value="mRNA"/>
</dbReference>
<dbReference type="SMR" id="E2S062"/>
<dbReference type="GO" id="GO:0005576">
    <property type="term" value="C:extracellular region"/>
    <property type="evidence" value="ECO:0007669"/>
    <property type="project" value="UniProtKB-SubCell"/>
</dbReference>
<dbReference type="GO" id="GO:0042151">
    <property type="term" value="C:nematocyst"/>
    <property type="evidence" value="ECO:0007669"/>
    <property type="project" value="UniProtKB-SubCell"/>
</dbReference>
<dbReference type="GO" id="GO:0015459">
    <property type="term" value="F:potassium channel regulator activity"/>
    <property type="evidence" value="ECO:0007669"/>
    <property type="project" value="UniProtKB-KW"/>
</dbReference>
<dbReference type="GO" id="GO:0090729">
    <property type="term" value="F:toxin activity"/>
    <property type="evidence" value="ECO:0007669"/>
    <property type="project" value="UniProtKB-KW"/>
</dbReference>
<dbReference type="InterPro" id="IPR003582">
    <property type="entry name" value="ShKT_dom"/>
</dbReference>
<dbReference type="SUPFAM" id="SSF57546">
    <property type="entry name" value="Crisp domain-like"/>
    <property type="match status" value="1"/>
</dbReference>
<dbReference type="PROSITE" id="PS51670">
    <property type="entry name" value="SHKT"/>
    <property type="match status" value="1"/>
</dbReference>
<comment type="function">
    <text evidence="2">Inhibits voltage-gated potassium channels (Kv) with higher potency for Kv1.1/KCNA1 and Kv1.3/KCNA3.</text>
</comment>
<comment type="subcellular location">
    <subcellularLocation>
        <location evidence="6">Secreted</location>
    </subcellularLocation>
    <subcellularLocation>
        <location evidence="6">Nematocyst</location>
    </subcellularLocation>
</comment>
<comment type="similarity">
    <text evidence="6">Belongs to the sea anemone type 1 potassium channel toxin family. Type 1a subfamily.</text>
</comment>
<evidence type="ECO:0000250" key="1"/>
<evidence type="ECO:0000250" key="2">
    <source>
        <dbReference type="UniProtKB" id="P29187"/>
    </source>
</evidence>
<evidence type="ECO:0000255" key="3"/>
<evidence type="ECO:0000255" key="4">
    <source>
        <dbReference type="PROSITE-ProRule" id="PRU01005"/>
    </source>
</evidence>
<evidence type="ECO:0000303" key="5">
    <source>
    </source>
</evidence>
<evidence type="ECO:0000305" key="6"/>
<evidence type="ECO:0000312" key="7">
    <source>
        <dbReference type="EMBL" id="BAJ23159.1"/>
    </source>
</evidence>